<protein>
    <recommendedName>
        <fullName>Citrate synthase</fullName>
        <ecNumber>2.3.3.16</ecNumber>
    </recommendedName>
</protein>
<reference key="1">
    <citation type="journal article" date="2009" name="BMC Genomics">
        <title>Analysis of the Rickettsia africae genome reveals that virulence acquisition in Rickettsia species may be explained by genome reduction.</title>
        <authorList>
            <person name="Fournier P.-E."/>
            <person name="El Karkouri K."/>
            <person name="Leroy Q."/>
            <person name="Robert C."/>
            <person name="Giumelli B."/>
            <person name="Renesto P."/>
            <person name="Socolovschi C."/>
            <person name="Parola P."/>
            <person name="Audic S."/>
            <person name="Raoult D."/>
        </authorList>
    </citation>
    <scope>NUCLEOTIDE SEQUENCE [LARGE SCALE GENOMIC DNA]</scope>
    <source>
        <strain>ESF-5</strain>
    </source>
</reference>
<reference key="2">
    <citation type="journal article" date="1997" name="Int. J. Syst. Bacteriol.">
        <title>Citrate synthase gene comparison, a new tool for phylogenetic analysis, and its application for the rickettsiae.</title>
        <authorList>
            <person name="Roux V."/>
            <person name="Rydkina E."/>
            <person name="Eremeeva M."/>
            <person name="Raoult D."/>
        </authorList>
    </citation>
    <scope>NUCLEOTIDE SEQUENCE [GENOMIC DNA] OF 8-418</scope>
</reference>
<dbReference type="EC" id="2.3.3.16"/>
<dbReference type="EMBL" id="CP001612">
    <property type="protein sequence ID" value="ACP53969.1"/>
    <property type="molecule type" value="Genomic_DNA"/>
</dbReference>
<dbReference type="EMBL" id="U59733">
    <property type="protein sequence ID" value="AAB02955.1"/>
    <property type="molecule type" value="Genomic_DNA"/>
</dbReference>
<dbReference type="RefSeq" id="WP_012720089.1">
    <property type="nucleotide sequence ID" value="NC_012633.1"/>
</dbReference>
<dbReference type="SMR" id="Q59732"/>
<dbReference type="KEGG" id="raf:RAF_ORF1196"/>
<dbReference type="HOGENOM" id="CLU_025068_0_0_5"/>
<dbReference type="UniPathway" id="UPA00223">
    <property type="reaction ID" value="UER00717"/>
</dbReference>
<dbReference type="Proteomes" id="UP000002305">
    <property type="component" value="Chromosome"/>
</dbReference>
<dbReference type="GO" id="GO:0005737">
    <property type="term" value="C:cytoplasm"/>
    <property type="evidence" value="ECO:0007669"/>
    <property type="project" value="InterPro"/>
</dbReference>
<dbReference type="GO" id="GO:0004108">
    <property type="term" value="F:citrate (Si)-synthase activity"/>
    <property type="evidence" value="ECO:0007669"/>
    <property type="project" value="InterPro"/>
</dbReference>
<dbReference type="GO" id="GO:0006099">
    <property type="term" value="P:tricarboxylic acid cycle"/>
    <property type="evidence" value="ECO:0007669"/>
    <property type="project" value="UniProtKB-UniPathway"/>
</dbReference>
<dbReference type="CDD" id="cd06114">
    <property type="entry name" value="EcCS_like"/>
    <property type="match status" value="1"/>
</dbReference>
<dbReference type="FunFam" id="1.10.230.10:FF:000002">
    <property type="entry name" value="Citrate synthase"/>
    <property type="match status" value="1"/>
</dbReference>
<dbReference type="Gene3D" id="2.20.28.60">
    <property type="match status" value="1"/>
</dbReference>
<dbReference type="Gene3D" id="1.10.580.10">
    <property type="entry name" value="Citrate Synthase, domain 1"/>
    <property type="match status" value="1"/>
</dbReference>
<dbReference type="Gene3D" id="1.10.230.10">
    <property type="entry name" value="Cytochrome P450-Terp, domain 2"/>
    <property type="match status" value="1"/>
</dbReference>
<dbReference type="InterPro" id="IPR016142">
    <property type="entry name" value="Citrate_synth-like_lrg_a-sub"/>
</dbReference>
<dbReference type="InterPro" id="IPR016143">
    <property type="entry name" value="Citrate_synth-like_sm_a-sub"/>
</dbReference>
<dbReference type="InterPro" id="IPR002020">
    <property type="entry name" value="Citrate_synthase"/>
</dbReference>
<dbReference type="InterPro" id="IPR019810">
    <property type="entry name" value="Citrate_synthase_AS"/>
</dbReference>
<dbReference type="InterPro" id="IPR024176">
    <property type="entry name" value="Citrate_synthase_bac-typ"/>
</dbReference>
<dbReference type="InterPro" id="IPR036969">
    <property type="entry name" value="Citrate_synthase_sf"/>
</dbReference>
<dbReference type="InterPro" id="IPR010953">
    <property type="entry name" value="Citrate_synthase_typ-I"/>
</dbReference>
<dbReference type="NCBIfam" id="TIGR01798">
    <property type="entry name" value="cit_synth_I"/>
    <property type="match status" value="1"/>
</dbReference>
<dbReference type="NCBIfam" id="NF004126">
    <property type="entry name" value="PRK05614.1"/>
    <property type="match status" value="1"/>
</dbReference>
<dbReference type="PANTHER" id="PTHR42871">
    <property type="entry name" value="CITRATE SYNTHASE"/>
    <property type="match status" value="1"/>
</dbReference>
<dbReference type="PANTHER" id="PTHR42871:SF1">
    <property type="entry name" value="CITRATE SYNTHASE"/>
    <property type="match status" value="1"/>
</dbReference>
<dbReference type="Pfam" id="PF00285">
    <property type="entry name" value="Citrate_synt"/>
    <property type="match status" value="1"/>
</dbReference>
<dbReference type="PIRSF" id="PIRSF001369">
    <property type="entry name" value="Citrate_synth"/>
    <property type="match status" value="1"/>
</dbReference>
<dbReference type="PRINTS" id="PR00143">
    <property type="entry name" value="CITRTSNTHASE"/>
</dbReference>
<dbReference type="SUPFAM" id="SSF48256">
    <property type="entry name" value="Citrate synthase"/>
    <property type="match status" value="1"/>
</dbReference>
<dbReference type="PROSITE" id="PS00480">
    <property type="entry name" value="CITRATE_SYNTHASE"/>
    <property type="match status" value="1"/>
</dbReference>
<gene>
    <name type="primary">gltA</name>
    <name type="ordered locus">RAF_ORF1196</name>
</gene>
<sequence length="435" mass="49205">MTDENNNDSEFAELKIRGKIFKLPILKASIGEDVIDISRVSAEADCFTYDPGFMSTASCQSTITYIDGDKGILRHRGYDIKDLAEKSDFLEVAYLLIYGELPSGEQYNNFTKQVAHHSLVNERLHYLFQTFCSSSHPMAIMLAAVGSLSAFYPDLLNFKEADYELTAIRMIAKIPTIAAMSYKYSIGQPFIYPDNSLDFTENFLHMMFATPCTKYTVNPIIKNALNKIFILHADHEQNASTSTVRIAGSSGANPFACISTGIASLWGPAHGGANEAVINMLKEIGSSEYIPKYIAKAKDKNDPFRLMGFGHRVYKNYDPRAAVLKETCKEVLKELGQLDNNPLLQIAIELEAIALKDEYFIERKLYPNVDFYSGIIYKAMGIPSQMFTVLFVIARTVGWMAQWKEMHEDPEQKISRPRQLYTGYVHREYKGIRER</sequence>
<name>CISY_RICAE</name>
<comment type="catalytic activity">
    <reaction evidence="2">
        <text>oxaloacetate + acetyl-CoA + H2O = citrate + CoA + H(+)</text>
        <dbReference type="Rhea" id="RHEA:16845"/>
        <dbReference type="ChEBI" id="CHEBI:15377"/>
        <dbReference type="ChEBI" id="CHEBI:15378"/>
        <dbReference type="ChEBI" id="CHEBI:16452"/>
        <dbReference type="ChEBI" id="CHEBI:16947"/>
        <dbReference type="ChEBI" id="CHEBI:57287"/>
        <dbReference type="ChEBI" id="CHEBI:57288"/>
        <dbReference type="EC" id="2.3.3.16"/>
    </reaction>
</comment>
<comment type="pathway">
    <text>Carbohydrate metabolism; tricarboxylic acid cycle; isocitrate from oxaloacetate: step 1/2.</text>
</comment>
<comment type="subunit">
    <text evidence="1">Homohexamer.</text>
</comment>
<comment type="miscellaneous">
    <text>Citrate synthase is found in nearly all cells capable of oxidative metabolism.</text>
</comment>
<comment type="similarity">
    <text evidence="3">Belongs to the citrate synthase family.</text>
</comment>
<feature type="chain" id="PRO_0000169956" description="Citrate synthase">
    <location>
        <begin position="1"/>
        <end position="435"/>
    </location>
</feature>
<feature type="active site" evidence="2">
    <location>
        <position position="311"/>
    </location>
</feature>
<feature type="active site" evidence="2">
    <location>
        <position position="370"/>
    </location>
</feature>
<feature type="sequence conflict" description="In Ref. 2; AAB02955." evidence="3" ref="2">
    <original>S</original>
    <variation>P</variation>
    <location>
        <position position="196"/>
    </location>
</feature>
<organism>
    <name type="scientific">Rickettsia africae (strain ESF-5)</name>
    <dbReference type="NCBI Taxonomy" id="347255"/>
    <lineage>
        <taxon>Bacteria</taxon>
        <taxon>Pseudomonadati</taxon>
        <taxon>Pseudomonadota</taxon>
        <taxon>Alphaproteobacteria</taxon>
        <taxon>Rickettsiales</taxon>
        <taxon>Rickettsiaceae</taxon>
        <taxon>Rickettsieae</taxon>
        <taxon>Rickettsia</taxon>
        <taxon>spotted fever group</taxon>
    </lineage>
</organism>
<evidence type="ECO:0000250" key="1"/>
<evidence type="ECO:0000255" key="2">
    <source>
        <dbReference type="PROSITE-ProRule" id="PRU10117"/>
    </source>
</evidence>
<evidence type="ECO:0000305" key="3"/>
<accession>Q59732</accession>
<accession>C3PLX9</accession>
<proteinExistence type="inferred from homology"/>
<keyword id="KW-0808">Transferase</keyword>
<keyword id="KW-0816">Tricarboxylic acid cycle</keyword>